<feature type="chain" id="PRO_0000352588" description="Inositol 2-dehydrogenase">
    <location>
        <begin position="1"/>
        <end position="366"/>
    </location>
</feature>
<gene>
    <name evidence="1" type="primary">iolG</name>
    <name type="ordered locus">RHA1_ro01355</name>
</gene>
<accession>Q0SH07</accession>
<name>IOLG_RHOJR</name>
<comment type="function">
    <text evidence="1">Involved in the oxidation of myo-inositol (MI) to 2-keto-myo-inositol (2KMI or 2-inosose).</text>
</comment>
<comment type="catalytic activity">
    <reaction evidence="1">
        <text>myo-inositol + NAD(+) = scyllo-inosose + NADH + H(+)</text>
        <dbReference type="Rhea" id="RHEA:16949"/>
        <dbReference type="ChEBI" id="CHEBI:15378"/>
        <dbReference type="ChEBI" id="CHEBI:17268"/>
        <dbReference type="ChEBI" id="CHEBI:17811"/>
        <dbReference type="ChEBI" id="CHEBI:57540"/>
        <dbReference type="ChEBI" id="CHEBI:57945"/>
        <dbReference type="EC" id="1.1.1.18"/>
    </reaction>
</comment>
<comment type="subunit">
    <text evidence="1">Homotetramer.</text>
</comment>
<comment type="similarity">
    <text evidence="1">Belongs to the Gfo/Idh/MocA family.</text>
</comment>
<sequence length="366" mass="38830">MSGSNDLRIAVLGVGMMGADHVARITERIKGATVAVVNDYFIEKAEQIAAGIPGCRVIGDPLDAIADPDVDAVVLATPGPTHEKQLLACLEHGKPVMCEKPLTTDVATSLEIVKREAELGKKLIQVGFMRRFDHEYEQLKTLIDDGTFGQVLLAHCVHRNPAVPPSFDSSMIVKDSLVHEVDVTRFLFDEEITSVHILRPAANPGAPEGLQDPQIALFSTESGRHVDVEVFVTTGVAYEVRTEIVAEKGSAFIGLDVGLVRKFGTGAGNGRSGAGMSGGEITPSFKERFGQAYDVEIQRWVNAARTGAETGNYIDGPGAWDGYAAAAVCAAGVQSLETGERVAVDMVDRSSIPGAEPAERPIGPGA</sequence>
<evidence type="ECO:0000255" key="1">
    <source>
        <dbReference type="HAMAP-Rule" id="MF_01671"/>
    </source>
</evidence>
<proteinExistence type="inferred from homology"/>
<protein>
    <recommendedName>
        <fullName evidence="1">Inositol 2-dehydrogenase</fullName>
        <ecNumber evidence="1">1.1.1.18</ecNumber>
    </recommendedName>
    <alternativeName>
        <fullName evidence="1">Myo-inositol 2-dehydrogenase</fullName>
        <shortName evidence="1">MI 2-dehydrogenase</shortName>
    </alternativeName>
</protein>
<keyword id="KW-0520">NAD</keyword>
<keyword id="KW-0560">Oxidoreductase</keyword>
<organism>
    <name type="scientific">Rhodococcus jostii (strain RHA1)</name>
    <dbReference type="NCBI Taxonomy" id="101510"/>
    <lineage>
        <taxon>Bacteria</taxon>
        <taxon>Bacillati</taxon>
        <taxon>Actinomycetota</taxon>
        <taxon>Actinomycetes</taxon>
        <taxon>Mycobacteriales</taxon>
        <taxon>Nocardiaceae</taxon>
        <taxon>Rhodococcus</taxon>
    </lineage>
</organism>
<dbReference type="EC" id="1.1.1.18" evidence="1"/>
<dbReference type="EMBL" id="CP000431">
    <property type="protein sequence ID" value="ABG93179.1"/>
    <property type="molecule type" value="Genomic_DNA"/>
</dbReference>
<dbReference type="RefSeq" id="WP_009474062.1">
    <property type="nucleotide sequence ID" value="NC_008268.1"/>
</dbReference>
<dbReference type="SMR" id="Q0SH07"/>
<dbReference type="KEGG" id="rha:RHA1_ro01355"/>
<dbReference type="eggNOG" id="COG0673">
    <property type="taxonomic scope" value="Bacteria"/>
</dbReference>
<dbReference type="HOGENOM" id="CLU_023194_0_1_11"/>
<dbReference type="OrthoDB" id="256869at2"/>
<dbReference type="Proteomes" id="UP000008710">
    <property type="component" value="Chromosome"/>
</dbReference>
<dbReference type="GO" id="GO:0050112">
    <property type="term" value="F:inositol 2-dehydrogenase (NAD+) activity"/>
    <property type="evidence" value="ECO:0007669"/>
    <property type="project" value="UniProtKB-UniRule"/>
</dbReference>
<dbReference type="GO" id="GO:0000166">
    <property type="term" value="F:nucleotide binding"/>
    <property type="evidence" value="ECO:0007669"/>
    <property type="project" value="InterPro"/>
</dbReference>
<dbReference type="GO" id="GO:0019310">
    <property type="term" value="P:inositol catabolic process"/>
    <property type="evidence" value="ECO:0007669"/>
    <property type="project" value="UniProtKB-UniRule"/>
</dbReference>
<dbReference type="Gene3D" id="3.30.360.10">
    <property type="entry name" value="Dihydrodipicolinate Reductase, domain 2"/>
    <property type="match status" value="1"/>
</dbReference>
<dbReference type="Gene3D" id="3.40.50.720">
    <property type="entry name" value="NAD(P)-binding Rossmann-like Domain"/>
    <property type="match status" value="1"/>
</dbReference>
<dbReference type="HAMAP" id="MF_01671">
    <property type="entry name" value="IolG"/>
    <property type="match status" value="1"/>
</dbReference>
<dbReference type="InterPro" id="IPR050424">
    <property type="entry name" value="Gfo-Idh-MocA_inositol_DH"/>
</dbReference>
<dbReference type="InterPro" id="IPR000683">
    <property type="entry name" value="Gfo/Idh/MocA-like_OxRdtase_N"/>
</dbReference>
<dbReference type="InterPro" id="IPR055170">
    <property type="entry name" value="GFO_IDH_MocA-like_dom"/>
</dbReference>
<dbReference type="InterPro" id="IPR023794">
    <property type="entry name" value="MI/DCI_dehydrogenase"/>
</dbReference>
<dbReference type="InterPro" id="IPR036291">
    <property type="entry name" value="NAD(P)-bd_dom_sf"/>
</dbReference>
<dbReference type="PANTHER" id="PTHR43593">
    <property type="match status" value="1"/>
</dbReference>
<dbReference type="PANTHER" id="PTHR43593:SF1">
    <property type="entry name" value="INOSITOL 2-DEHYDROGENASE"/>
    <property type="match status" value="1"/>
</dbReference>
<dbReference type="Pfam" id="PF01408">
    <property type="entry name" value="GFO_IDH_MocA"/>
    <property type="match status" value="1"/>
</dbReference>
<dbReference type="Pfam" id="PF22725">
    <property type="entry name" value="GFO_IDH_MocA_C3"/>
    <property type="match status" value="1"/>
</dbReference>
<dbReference type="SUPFAM" id="SSF55347">
    <property type="entry name" value="Glyceraldehyde-3-phosphate dehydrogenase-like, C-terminal domain"/>
    <property type="match status" value="1"/>
</dbReference>
<dbReference type="SUPFAM" id="SSF51735">
    <property type="entry name" value="NAD(P)-binding Rossmann-fold domains"/>
    <property type="match status" value="1"/>
</dbReference>
<reference key="1">
    <citation type="journal article" date="2006" name="Proc. Natl. Acad. Sci. U.S.A.">
        <title>The complete genome of Rhodococcus sp. RHA1 provides insights into a catabolic powerhouse.</title>
        <authorList>
            <person name="McLeod M.P."/>
            <person name="Warren R.L."/>
            <person name="Hsiao W.W.L."/>
            <person name="Araki N."/>
            <person name="Myhre M."/>
            <person name="Fernandes C."/>
            <person name="Miyazawa D."/>
            <person name="Wong W."/>
            <person name="Lillquist A.L."/>
            <person name="Wang D."/>
            <person name="Dosanjh M."/>
            <person name="Hara H."/>
            <person name="Petrescu A."/>
            <person name="Morin R.D."/>
            <person name="Yang G."/>
            <person name="Stott J.M."/>
            <person name="Schein J.E."/>
            <person name="Shin H."/>
            <person name="Smailus D."/>
            <person name="Siddiqui A.S."/>
            <person name="Marra M.A."/>
            <person name="Jones S.J.M."/>
            <person name="Holt R."/>
            <person name="Brinkman F.S.L."/>
            <person name="Miyauchi K."/>
            <person name="Fukuda M."/>
            <person name="Davies J.E."/>
            <person name="Mohn W.W."/>
            <person name="Eltis L.D."/>
        </authorList>
    </citation>
    <scope>NUCLEOTIDE SEQUENCE [LARGE SCALE GENOMIC DNA]</scope>
    <source>
        <strain>RHA1</strain>
    </source>
</reference>